<proteinExistence type="inferred from homology"/>
<organism>
    <name type="scientific">Streptococcus mutans serotype c (strain ATCC 700610 / UA159)</name>
    <dbReference type="NCBI Taxonomy" id="210007"/>
    <lineage>
        <taxon>Bacteria</taxon>
        <taxon>Bacillati</taxon>
        <taxon>Bacillota</taxon>
        <taxon>Bacilli</taxon>
        <taxon>Lactobacillales</taxon>
        <taxon>Streptococcaceae</taxon>
        <taxon>Streptococcus</taxon>
    </lineage>
</organism>
<evidence type="ECO:0000255" key="1">
    <source>
        <dbReference type="HAMAP-Rule" id="MF_01574"/>
    </source>
</evidence>
<evidence type="ECO:0000305" key="2"/>
<feature type="chain" id="PRO_0000063893" description="6-phospho-beta-galactosidase">
    <location>
        <begin position="1"/>
        <end position="468"/>
    </location>
</feature>
<feature type="active site" description="Proton donor" evidence="1">
    <location>
        <position position="160"/>
    </location>
</feature>
<feature type="active site" description="Nucleophile" evidence="1">
    <location>
        <position position="375"/>
    </location>
</feature>
<feature type="binding site" evidence="1">
    <location>
        <position position="19"/>
    </location>
    <ligand>
        <name>D-galactose 6-phosphate</name>
        <dbReference type="ChEBI" id="CHEBI:91004"/>
    </ligand>
</feature>
<feature type="binding site" evidence="1">
    <location>
        <position position="116"/>
    </location>
    <ligand>
        <name>D-galactose 6-phosphate</name>
        <dbReference type="ChEBI" id="CHEBI:91004"/>
    </ligand>
</feature>
<feature type="binding site" evidence="1">
    <location>
        <position position="159"/>
    </location>
    <ligand>
        <name>D-galactose 6-phosphate</name>
        <dbReference type="ChEBI" id="CHEBI:91004"/>
    </ligand>
</feature>
<feature type="binding site" evidence="1">
    <location>
        <position position="160"/>
    </location>
    <ligand>
        <name>D-galactose 6-phosphate</name>
        <dbReference type="ChEBI" id="CHEBI:91004"/>
    </ligand>
</feature>
<feature type="binding site" evidence="1">
    <location>
        <position position="297"/>
    </location>
    <ligand>
        <name>D-galactose 6-phosphate</name>
        <dbReference type="ChEBI" id="CHEBI:91004"/>
    </ligand>
</feature>
<feature type="binding site" evidence="1">
    <location>
        <position position="428"/>
    </location>
    <ligand>
        <name>D-galactose 6-phosphate</name>
        <dbReference type="ChEBI" id="CHEBI:91004"/>
    </ligand>
</feature>
<feature type="binding site" evidence="1">
    <location>
        <position position="429"/>
    </location>
    <ligand>
        <name>D-galactose 6-phosphate</name>
        <dbReference type="ChEBI" id="CHEBI:91004"/>
    </ligand>
</feature>
<feature type="binding site" evidence="1">
    <location>
        <position position="435"/>
    </location>
    <ligand>
        <name>D-galactose 6-phosphate</name>
        <dbReference type="ChEBI" id="CHEBI:91004"/>
    </ligand>
</feature>
<feature type="binding site" evidence="1">
    <location>
        <position position="437"/>
    </location>
    <ligand>
        <name>D-galactose 6-phosphate</name>
        <dbReference type="ChEBI" id="CHEBI:91004"/>
    </ligand>
</feature>
<feature type="sequence conflict" description="In Ref. 1; AAA16450." evidence="2" ref="1">
    <original>P</original>
    <variation>S</variation>
    <location>
        <position position="150"/>
    </location>
</feature>
<feature type="sequence conflict" description="In Ref. 1; AAA16450." evidence="2" ref="1">
    <original>M</original>
    <variation>I</variation>
    <location>
        <position position="300"/>
    </location>
</feature>
<comment type="catalytic activity">
    <reaction evidence="1">
        <text>a 6-phospho-beta-D-galactoside + H2O = D-galactose 6-phosphate + an alcohol</text>
        <dbReference type="Rhea" id="RHEA:24568"/>
        <dbReference type="ChEBI" id="CHEBI:15377"/>
        <dbReference type="ChEBI" id="CHEBI:30879"/>
        <dbReference type="ChEBI" id="CHEBI:58534"/>
        <dbReference type="ChEBI" id="CHEBI:91004"/>
        <dbReference type="EC" id="3.2.1.85"/>
    </reaction>
</comment>
<comment type="pathway">
    <text evidence="1">Carbohydrate metabolism; lactose degradation; D-galactose 6-phosphate and beta-D-glucose from lactose 6-phosphate: step 1/1.</text>
</comment>
<comment type="similarity">
    <text evidence="1">Belongs to the glycosyl hydrolase 1 family.</text>
</comment>
<sequence length="468" mass="53762">MSKTLPKDFIFGGATAAYQAEGATHADGKGPVAWDKYLEDNYWYTAEPASDFYHQYPVDLKLAEEFGVNGIRISIAWSRIFPKGYGAVNPKGLAFYHNLFAECHKRHVEPFVTLHHFDTPEALHSNGDFLNRENIEHFVNYAEFCFKEFPEVNYWTTFNEIGPIGDGQYLVGKFPPGIQYDLAKVFQSHHNMMVAHSKAVKLFKDGGYSGEIGVVHALPTKYPYDPNNPADIRAAELEDIIHNKFILDATYLGKYSEKTMEGVNHILAVNGGQLDLREEDFAALEAAKDLNDFLGINYYMSDWMRAFDGETEITHNAKGEKGSSKYQIKGVGRREAPVNVPKTDWDWIIYPQGLYDQIMRVKQDYPNYKKIYITENGLGYKDEFVNHTVYDDARIDYVKKHLEVLSDAIADGANVKGYFIWSLMDVFSWSNGYEKRYGLFYVDFDTQERYPKKSAYWYKKLAETQIID</sequence>
<accession>P50978</accession>
<protein>
    <recommendedName>
        <fullName evidence="1">6-phospho-beta-galactosidase</fullName>
        <ecNumber evidence="1">3.2.1.85</ecNumber>
    </recommendedName>
    <alternativeName>
        <fullName evidence="1">Beta-D-phosphogalactoside galactohydrolase</fullName>
        <shortName evidence="1">PGALase</shortName>
    </alternativeName>
    <alternativeName>
        <fullName evidence="1">P-beta-Gal</fullName>
        <shortName evidence="1">PBG</shortName>
    </alternativeName>
</protein>
<name>LACG_STRMU</name>
<reference key="1">
    <citation type="journal article" date="1993" name="J. Gen. Microbiol.">
        <title>Isolation, characterization and nucleotide sequence of the Streptococcus mutans lactose-specific enzyme II (lacE) gene of the PTS and the phospho-beta-galactosidase (lacG) gene.</title>
        <authorList>
            <person name="Honeyman A.L."/>
            <person name="Curtiss R. III"/>
        </authorList>
    </citation>
    <scope>NUCLEOTIDE SEQUENCE [GENOMIC DNA]</scope>
    <source>
        <strain>ATCC 700611 / UA130 / Serotype c</strain>
    </source>
</reference>
<reference key="2">
    <citation type="journal article" date="2002" name="Proc. Natl. Acad. Sci. U.S.A.">
        <title>Genome sequence of Streptococcus mutans UA159, a cariogenic dental pathogen.</title>
        <authorList>
            <person name="Ajdic D.J."/>
            <person name="McShan W.M."/>
            <person name="McLaughlin R.E."/>
            <person name="Savic G."/>
            <person name="Chang J."/>
            <person name="Carson M.B."/>
            <person name="Primeaux C."/>
            <person name="Tian R."/>
            <person name="Kenton S."/>
            <person name="Jia H.G."/>
            <person name="Lin S.P."/>
            <person name="Qian Y."/>
            <person name="Li S."/>
            <person name="Zhu H."/>
            <person name="Najar F.Z."/>
            <person name="Lai H."/>
            <person name="White J."/>
            <person name="Roe B.A."/>
            <person name="Ferretti J.J."/>
        </authorList>
    </citation>
    <scope>NUCLEOTIDE SEQUENCE [LARGE SCALE GENOMIC DNA]</scope>
    <source>
        <strain>ATCC 700610 / UA159</strain>
    </source>
</reference>
<dbReference type="EC" id="3.2.1.85" evidence="1"/>
<dbReference type="EMBL" id="L18993">
    <property type="protein sequence ID" value="AAA16450.1"/>
    <property type="molecule type" value="Unassigned_DNA"/>
</dbReference>
<dbReference type="EMBL" id="AE014133">
    <property type="protein sequence ID" value="AAN59144.1"/>
    <property type="molecule type" value="Genomic_DNA"/>
</dbReference>
<dbReference type="RefSeq" id="NP_721838.1">
    <property type="nucleotide sequence ID" value="NC_004350.2"/>
</dbReference>
<dbReference type="RefSeq" id="WP_002263058.1">
    <property type="nucleotide sequence ID" value="NC_004350.2"/>
</dbReference>
<dbReference type="SMR" id="P50978"/>
<dbReference type="STRING" id="210007.SMU_1490"/>
<dbReference type="CAZy" id="GH1">
    <property type="family name" value="Glycoside Hydrolase Family 1"/>
</dbReference>
<dbReference type="KEGG" id="smu:SMU_1490"/>
<dbReference type="PATRIC" id="fig|210007.7.peg.1326"/>
<dbReference type="eggNOG" id="COG2723">
    <property type="taxonomic scope" value="Bacteria"/>
</dbReference>
<dbReference type="HOGENOM" id="CLU_001859_1_3_9"/>
<dbReference type="OrthoDB" id="9765195at2"/>
<dbReference type="PhylomeDB" id="P50978"/>
<dbReference type="SABIO-RK" id="P50978"/>
<dbReference type="UniPathway" id="UPA00542">
    <property type="reaction ID" value="UER00605"/>
</dbReference>
<dbReference type="Proteomes" id="UP000002512">
    <property type="component" value="Chromosome"/>
</dbReference>
<dbReference type="GO" id="GO:0005829">
    <property type="term" value="C:cytosol"/>
    <property type="evidence" value="ECO:0007669"/>
    <property type="project" value="TreeGrafter"/>
</dbReference>
<dbReference type="GO" id="GO:0033920">
    <property type="term" value="F:6-phospho-beta-galactosidase activity"/>
    <property type="evidence" value="ECO:0007669"/>
    <property type="project" value="UniProtKB-UniRule"/>
</dbReference>
<dbReference type="GO" id="GO:0008422">
    <property type="term" value="F:beta-glucosidase activity"/>
    <property type="evidence" value="ECO:0007669"/>
    <property type="project" value="TreeGrafter"/>
</dbReference>
<dbReference type="GO" id="GO:0005975">
    <property type="term" value="P:carbohydrate metabolic process"/>
    <property type="evidence" value="ECO:0000315"/>
    <property type="project" value="CACAO"/>
</dbReference>
<dbReference type="GO" id="GO:0019512">
    <property type="term" value="P:lactose catabolic process via tagatose-6-phosphate"/>
    <property type="evidence" value="ECO:0007669"/>
    <property type="project" value="InterPro"/>
</dbReference>
<dbReference type="FunFam" id="3.20.20.80:FF:000004">
    <property type="entry name" value="Beta-glucosidase 6-phospho-beta-glucosidase"/>
    <property type="match status" value="1"/>
</dbReference>
<dbReference type="Gene3D" id="3.20.20.80">
    <property type="entry name" value="Glycosidases"/>
    <property type="match status" value="1"/>
</dbReference>
<dbReference type="HAMAP" id="MF_01574">
    <property type="entry name" value="LacG"/>
    <property type="match status" value="1"/>
</dbReference>
<dbReference type="InterPro" id="IPR005928">
    <property type="entry name" value="6P-beta-galactosidase"/>
</dbReference>
<dbReference type="InterPro" id="IPR001360">
    <property type="entry name" value="Glyco_hydro_1"/>
</dbReference>
<dbReference type="InterPro" id="IPR018120">
    <property type="entry name" value="Glyco_hydro_1_AS"/>
</dbReference>
<dbReference type="InterPro" id="IPR033132">
    <property type="entry name" value="Glyco_hydro_1_N_CS"/>
</dbReference>
<dbReference type="InterPro" id="IPR017853">
    <property type="entry name" value="Glycoside_hydrolase_SF"/>
</dbReference>
<dbReference type="NCBIfam" id="TIGR01233">
    <property type="entry name" value="lacG"/>
    <property type="match status" value="1"/>
</dbReference>
<dbReference type="NCBIfam" id="NF010036">
    <property type="entry name" value="PRK13511.1"/>
    <property type="match status" value="1"/>
</dbReference>
<dbReference type="PANTHER" id="PTHR10353">
    <property type="entry name" value="GLYCOSYL HYDROLASE"/>
    <property type="match status" value="1"/>
</dbReference>
<dbReference type="PANTHER" id="PTHR10353:SF36">
    <property type="entry name" value="LP05116P"/>
    <property type="match status" value="1"/>
</dbReference>
<dbReference type="Pfam" id="PF00232">
    <property type="entry name" value="Glyco_hydro_1"/>
    <property type="match status" value="1"/>
</dbReference>
<dbReference type="PRINTS" id="PR00131">
    <property type="entry name" value="GLHYDRLASE1"/>
</dbReference>
<dbReference type="SUPFAM" id="SSF51445">
    <property type="entry name" value="(Trans)glycosidases"/>
    <property type="match status" value="1"/>
</dbReference>
<dbReference type="PROSITE" id="PS00572">
    <property type="entry name" value="GLYCOSYL_HYDROL_F1_1"/>
    <property type="match status" value="1"/>
</dbReference>
<dbReference type="PROSITE" id="PS00653">
    <property type="entry name" value="GLYCOSYL_HYDROL_F1_2"/>
    <property type="match status" value="1"/>
</dbReference>
<keyword id="KW-0326">Glycosidase</keyword>
<keyword id="KW-0378">Hydrolase</keyword>
<keyword id="KW-1185">Reference proteome</keyword>
<gene>
    <name evidence="1" type="primary">lacG</name>
    <name type="ordered locus">SMU_1490</name>
</gene>